<comment type="similarity">
    <text evidence="1">Belongs to the bacterial ribosomal protein bL34 family.</text>
</comment>
<keyword id="KW-1185">Reference proteome</keyword>
<keyword id="KW-0687">Ribonucleoprotein</keyword>
<keyword id="KW-0689">Ribosomal protein</keyword>
<reference key="1">
    <citation type="journal article" date="2009" name="Stand. Genomic Sci.">
        <title>Complete genome sequence of Beutenbergia cavernae type strain (HKI 0122).</title>
        <authorList>
            <person name="Land M."/>
            <person name="Pukall R."/>
            <person name="Abt B."/>
            <person name="Goker M."/>
            <person name="Rohde M."/>
            <person name="Glavina Del Rio T."/>
            <person name="Tice H."/>
            <person name="Copeland A."/>
            <person name="Cheng J.F."/>
            <person name="Lucas S."/>
            <person name="Chen F."/>
            <person name="Nolan M."/>
            <person name="Bruce D."/>
            <person name="Goodwin L."/>
            <person name="Pitluck S."/>
            <person name="Ivanova N."/>
            <person name="Mavromatis K."/>
            <person name="Ovchinnikova G."/>
            <person name="Pati A."/>
            <person name="Chen A."/>
            <person name="Palaniappan K."/>
            <person name="Hauser L."/>
            <person name="Chang Y.J."/>
            <person name="Jefferies C.C."/>
            <person name="Saunders E."/>
            <person name="Brettin T."/>
            <person name="Detter J.C."/>
            <person name="Han C."/>
            <person name="Chain P."/>
            <person name="Bristow J."/>
            <person name="Eisen J.A."/>
            <person name="Markowitz V."/>
            <person name="Hugenholtz P."/>
            <person name="Kyrpides N.C."/>
            <person name="Klenk H.P."/>
            <person name="Lapidus A."/>
        </authorList>
    </citation>
    <scope>NUCLEOTIDE SEQUENCE [LARGE SCALE GENOMIC DNA]</scope>
    <source>
        <strain>ATCC BAA-8 / DSM 12333 / CCUG 43141 / JCM 11478 / NBRC 16432 / NCIMB 13614 / HKI 0122</strain>
    </source>
</reference>
<name>RL34_BEUC1</name>
<proteinExistence type="inferred from homology"/>
<gene>
    <name evidence="1" type="primary">rpmH</name>
    <name type="ordered locus">Bcav_4225</name>
</gene>
<sequence length="45" mass="5334">MSKRTFQPNNRRRAKVHGFRLRMRTRAGRAILAARRRKGRVELSA</sequence>
<accession>C5C6N9</accession>
<evidence type="ECO:0000255" key="1">
    <source>
        <dbReference type="HAMAP-Rule" id="MF_00391"/>
    </source>
</evidence>
<evidence type="ECO:0000305" key="2"/>
<dbReference type="EMBL" id="CP001618">
    <property type="protein sequence ID" value="ACQ82463.1"/>
    <property type="molecule type" value="Genomic_DNA"/>
</dbReference>
<dbReference type="RefSeq" id="WP_015884700.1">
    <property type="nucleotide sequence ID" value="NC_012669.1"/>
</dbReference>
<dbReference type="SMR" id="C5C6N9"/>
<dbReference type="STRING" id="471853.Bcav_4225"/>
<dbReference type="KEGG" id="bcv:Bcav_4225"/>
<dbReference type="eggNOG" id="COG0230">
    <property type="taxonomic scope" value="Bacteria"/>
</dbReference>
<dbReference type="HOGENOM" id="CLU_129938_2_1_11"/>
<dbReference type="Proteomes" id="UP000007962">
    <property type="component" value="Chromosome"/>
</dbReference>
<dbReference type="GO" id="GO:1990904">
    <property type="term" value="C:ribonucleoprotein complex"/>
    <property type="evidence" value="ECO:0007669"/>
    <property type="project" value="UniProtKB-KW"/>
</dbReference>
<dbReference type="GO" id="GO:0005840">
    <property type="term" value="C:ribosome"/>
    <property type="evidence" value="ECO:0007669"/>
    <property type="project" value="UniProtKB-KW"/>
</dbReference>
<dbReference type="GO" id="GO:0003735">
    <property type="term" value="F:structural constituent of ribosome"/>
    <property type="evidence" value="ECO:0007669"/>
    <property type="project" value="InterPro"/>
</dbReference>
<dbReference type="GO" id="GO:0006412">
    <property type="term" value="P:translation"/>
    <property type="evidence" value="ECO:0007669"/>
    <property type="project" value="UniProtKB-UniRule"/>
</dbReference>
<dbReference type="FunFam" id="1.10.287.3980:FF:000001">
    <property type="entry name" value="Mitochondrial ribosomal protein L34"/>
    <property type="match status" value="1"/>
</dbReference>
<dbReference type="Gene3D" id="1.10.287.3980">
    <property type="match status" value="1"/>
</dbReference>
<dbReference type="HAMAP" id="MF_00391">
    <property type="entry name" value="Ribosomal_bL34"/>
    <property type="match status" value="1"/>
</dbReference>
<dbReference type="InterPro" id="IPR000271">
    <property type="entry name" value="Ribosomal_bL34"/>
</dbReference>
<dbReference type="InterPro" id="IPR020939">
    <property type="entry name" value="Ribosomal_bL34_CS"/>
</dbReference>
<dbReference type="NCBIfam" id="TIGR01030">
    <property type="entry name" value="rpmH_bact"/>
    <property type="match status" value="1"/>
</dbReference>
<dbReference type="PANTHER" id="PTHR14503:SF4">
    <property type="entry name" value="LARGE RIBOSOMAL SUBUNIT PROTEIN BL34M"/>
    <property type="match status" value="1"/>
</dbReference>
<dbReference type="PANTHER" id="PTHR14503">
    <property type="entry name" value="MITOCHONDRIAL RIBOSOMAL PROTEIN 34 FAMILY MEMBER"/>
    <property type="match status" value="1"/>
</dbReference>
<dbReference type="Pfam" id="PF00468">
    <property type="entry name" value="Ribosomal_L34"/>
    <property type="match status" value="1"/>
</dbReference>
<dbReference type="PROSITE" id="PS00784">
    <property type="entry name" value="RIBOSOMAL_L34"/>
    <property type="match status" value="1"/>
</dbReference>
<protein>
    <recommendedName>
        <fullName evidence="1">Large ribosomal subunit protein bL34</fullName>
    </recommendedName>
    <alternativeName>
        <fullName evidence="2">50S ribosomal protein L34</fullName>
    </alternativeName>
</protein>
<feature type="chain" id="PRO_1000205818" description="Large ribosomal subunit protein bL34">
    <location>
        <begin position="1"/>
        <end position="45"/>
    </location>
</feature>
<organism>
    <name type="scientific">Beutenbergia cavernae (strain ATCC BAA-8 / DSM 12333 / CCUG 43141 / JCM 11478 / NBRC 16432 / NCIMB 13614 / HKI 0122)</name>
    <dbReference type="NCBI Taxonomy" id="471853"/>
    <lineage>
        <taxon>Bacteria</taxon>
        <taxon>Bacillati</taxon>
        <taxon>Actinomycetota</taxon>
        <taxon>Actinomycetes</taxon>
        <taxon>Micrococcales</taxon>
        <taxon>Beutenbergiaceae</taxon>
        <taxon>Beutenbergia</taxon>
    </lineage>
</organism>